<keyword id="KW-0131">Cell cycle</keyword>
<keyword id="KW-0132">Cell division</keyword>
<keyword id="KW-0195">Cyclin</keyword>
<keyword id="KW-1185">Reference proteome</keyword>
<accession>Q6K1Z6</accession>
<accession>A0A0P0VLL2</accession>
<accession>A3A8W3</accession>
<name>CCF21_ORYSJ</name>
<sequence>MDSIMEPYVADLLADDITASMVELLSGDGGAAQMDVGVLDAYLRAIGALPAHPAAPGADLAAAAEVESMASNDDTNGNWDTKVDAKVPSAFLPPPPGFPPLPVPALADEPVYAAPVDEGDAIRAFMQQLEWSEQYNGDDDAPAPDDSMASRPQLCAPYDDDIDANLRAMEKDAAERPSPDYLDTVHNGQISAASRASLVAWMGRLTHRYELAAGTLHRAVSYFDRFLSARALPSYTEHQLSLVGATAVYTAAKYEDQGTVFKLDAREIASYGEFASAQEVLAMEREMMAALGYRLGGPNAETFVEHFTRYSKGKEELRVQRLARHIADRSLESYGCLGYLPSVVAAAVISIARWTLNPPGALPWSSELHELTGYSSQDISSCVLTVLNTQ</sequence>
<dbReference type="EMBL" id="AP006438">
    <property type="protein sequence ID" value="BAD20135.1"/>
    <property type="status" value="ALT_SEQ"/>
    <property type="molecule type" value="Genomic_DNA"/>
</dbReference>
<dbReference type="EMBL" id="AP014958">
    <property type="protein sequence ID" value="BAS79672.1"/>
    <property type="molecule type" value="Genomic_DNA"/>
</dbReference>
<dbReference type="EMBL" id="CM000139">
    <property type="protein sequence ID" value="EAZ23752.1"/>
    <property type="molecule type" value="Genomic_DNA"/>
</dbReference>
<dbReference type="SMR" id="Q6K1Z6"/>
<dbReference type="FunCoup" id="Q6K1Z6">
    <property type="interactions" value="94"/>
</dbReference>
<dbReference type="STRING" id="39947.Q6K1Z6"/>
<dbReference type="iPTMnet" id="Q6K1Z6"/>
<dbReference type="PaxDb" id="39947-Q6K1Z6"/>
<dbReference type="EnsemblPlants" id="Os02t0607000-00">
    <property type="protein sequence ID" value="Os02t0607000-00"/>
    <property type="gene ID" value="Os02g0607000"/>
</dbReference>
<dbReference type="GeneID" id="107275563"/>
<dbReference type="Gramene" id="Os02t0607000-00">
    <property type="protein sequence ID" value="Os02t0607000-00"/>
    <property type="gene ID" value="Os02g0607000"/>
</dbReference>
<dbReference type="KEGG" id="osa:107275563"/>
<dbReference type="eggNOG" id="KOG0654">
    <property type="taxonomic scope" value="Eukaryota"/>
</dbReference>
<dbReference type="HOGENOM" id="CLU_052910_3_1_1"/>
<dbReference type="InParanoid" id="Q6K1Z6"/>
<dbReference type="OMA" id="IARYGKF"/>
<dbReference type="OrthoDB" id="645822at2759"/>
<dbReference type="Proteomes" id="UP000000763">
    <property type="component" value="Chromosome 2"/>
</dbReference>
<dbReference type="Proteomes" id="UP000007752">
    <property type="component" value="Chromosome 2"/>
</dbReference>
<dbReference type="Proteomes" id="UP000059680">
    <property type="component" value="Chromosome 2"/>
</dbReference>
<dbReference type="GO" id="GO:0000307">
    <property type="term" value="C:cyclin-dependent protein kinase holoenzyme complex"/>
    <property type="evidence" value="ECO:0000318"/>
    <property type="project" value="GO_Central"/>
</dbReference>
<dbReference type="GO" id="GO:0005737">
    <property type="term" value="C:cytoplasm"/>
    <property type="evidence" value="ECO:0000318"/>
    <property type="project" value="GO_Central"/>
</dbReference>
<dbReference type="GO" id="GO:0005634">
    <property type="term" value="C:nucleus"/>
    <property type="evidence" value="ECO:0000318"/>
    <property type="project" value="GO_Central"/>
</dbReference>
<dbReference type="GO" id="GO:0016538">
    <property type="term" value="F:cyclin-dependent protein serine/threonine kinase regulator activity"/>
    <property type="evidence" value="ECO:0000318"/>
    <property type="project" value="GO_Central"/>
</dbReference>
<dbReference type="GO" id="GO:0051301">
    <property type="term" value="P:cell division"/>
    <property type="evidence" value="ECO:0007669"/>
    <property type="project" value="UniProtKB-KW"/>
</dbReference>
<dbReference type="GO" id="GO:0000082">
    <property type="term" value="P:G1/S transition of mitotic cell cycle"/>
    <property type="evidence" value="ECO:0000318"/>
    <property type="project" value="GO_Central"/>
</dbReference>
<dbReference type="FunFam" id="1.10.472.10:FF:000157">
    <property type="entry name" value="Putative cyclin-F2-1"/>
    <property type="match status" value="1"/>
</dbReference>
<dbReference type="Gene3D" id="1.10.472.10">
    <property type="entry name" value="Cyclin-like"/>
    <property type="match status" value="2"/>
</dbReference>
<dbReference type="InterPro" id="IPR039361">
    <property type="entry name" value="Cyclin"/>
</dbReference>
<dbReference type="InterPro" id="IPR013763">
    <property type="entry name" value="Cyclin-like_dom"/>
</dbReference>
<dbReference type="InterPro" id="IPR036915">
    <property type="entry name" value="Cyclin-like_sf"/>
</dbReference>
<dbReference type="InterPro" id="IPR004367">
    <property type="entry name" value="Cyclin_C-dom"/>
</dbReference>
<dbReference type="InterPro" id="IPR006671">
    <property type="entry name" value="Cyclin_N"/>
</dbReference>
<dbReference type="InterPro" id="IPR048258">
    <property type="entry name" value="Cyclins_cyclin-box"/>
</dbReference>
<dbReference type="PANTHER" id="PTHR10177">
    <property type="entry name" value="CYCLINS"/>
    <property type="match status" value="1"/>
</dbReference>
<dbReference type="Pfam" id="PF02984">
    <property type="entry name" value="Cyclin_C"/>
    <property type="match status" value="1"/>
</dbReference>
<dbReference type="Pfam" id="PF00134">
    <property type="entry name" value="Cyclin_N"/>
    <property type="match status" value="1"/>
</dbReference>
<dbReference type="SMART" id="SM00385">
    <property type="entry name" value="CYCLIN"/>
    <property type="match status" value="2"/>
</dbReference>
<dbReference type="SMART" id="SM01332">
    <property type="entry name" value="Cyclin_C"/>
    <property type="match status" value="1"/>
</dbReference>
<dbReference type="SUPFAM" id="SSF47954">
    <property type="entry name" value="Cyclin-like"/>
    <property type="match status" value="2"/>
</dbReference>
<dbReference type="PROSITE" id="PS00292">
    <property type="entry name" value="CYCLINS"/>
    <property type="match status" value="1"/>
</dbReference>
<proteinExistence type="inferred from homology"/>
<protein>
    <recommendedName>
        <fullName>Putative cyclin-F2-1</fullName>
        <shortName>CycF2;1</shortName>
    </recommendedName>
</protein>
<feature type="chain" id="PRO_0000287045" description="Putative cyclin-F2-1">
    <location>
        <begin position="1"/>
        <end position="390"/>
    </location>
</feature>
<feature type="region of interest" description="Disordered" evidence="1">
    <location>
        <begin position="135"/>
        <end position="154"/>
    </location>
</feature>
<comment type="similarity">
    <text evidence="2">Belongs to the cyclin family. Cyclin F subfamily.</text>
</comment>
<comment type="sequence caution" evidence="2">
    <conflict type="erroneous gene model prediction">
        <sequence resource="EMBL-CDS" id="BAD20135"/>
    </conflict>
</comment>
<reference key="1">
    <citation type="journal article" date="2005" name="Nature">
        <title>The map-based sequence of the rice genome.</title>
        <authorList>
            <consortium name="International rice genome sequencing project (IRGSP)"/>
        </authorList>
    </citation>
    <scope>NUCLEOTIDE SEQUENCE [LARGE SCALE GENOMIC DNA]</scope>
    <source>
        <strain>cv. Nipponbare</strain>
    </source>
</reference>
<reference key="2">
    <citation type="journal article" date="2013" name="Rice">
        <title>Improvement of the Oryza sativa Nipponbare reference genome using next generation sequence and optical map data.</title>
        <authorList>
            <person name="Kawahara Y."/>
            <person name="de la Bastide M."/>
            <person name="Hamilton J.P."/>
            <person name="Kanamori H."/>
            <person name="McCombie W.R."/>
            <person name="Ouyang S."/>
            <person name="Schwartz D.C."/>
            <person name="Tanaka T."/>
            <person name="Wu J."/>
            <person name="Zhou S."/>
            <person name="Childs K.L."/>
            <person name="Davidson R.M."/>
            <person name="Lin H."/>
            <person name="Quesada-Ocampo L."/>
            <person name="Vaillancourt B."/>
            <person name="Sakai H."/>
            <person name="Lee S.S."/>
            <person name="Kim J."/>
            <person name="Numa H."/>
            <person name="Itoh T."/>
            <person name="Buell C.R."/>
            <person name="Matsumoto T."/>
        </authorList>
    </citation>
    <scope>GENOME REANNOTATION</scope>
    <source>
        <strain>cv. Nipponbare</strain>
    </source>
</reference>
<reference key="3">
    <citation type="journal article" date="2005" name="PLoS Biol.">
        <title>The genomes of Oryza sativa: a history of duplications.</title>
        <authorList>
            <person name="Yu J."/>
            <person name="Wang J."/>
            <person name="Lin W."/>
            <person name="Li S."/>
            <person name="Li H."/>
            <person name="Zhou J."/>
            <person name="Ni P."/>
            <person name="Dong W."/>
            <person name="Hu S."/>
            <person name="Zeng C."/>
            <person name="Zhang J."/>
            <person name="Zhang Y."/>
            <person name="Li R."/>
            <person name="Xu Z."/>
            <person name="Li S."/>
            <person name="Li X."/>
            <person name="Zheng H."/>
            <person name="Cong L."/>
            <person name="Lin L."/>
            <person name="Yin J."/>
            <person name="Geng J."/>
            <person name="Li G."/>
            <person name="Shi J."/>
            <person name="Liu J."/>
            <person name="Lv H."/>
            <person name="Li J."/>
            <person name="Wang J."/>
            <person name="Deng Y."/>
            <person name="Ran L."/>
            <person name="Shi X."/>
            <person name="Wang X."/>
            <person name="Wu Q."/>
            <person name="Li C."/>
            <person name="Ren X."/>
            <person name="Wang J."/>
            <person name="Wang X."/>
            <person name="Li D."/>
            <person name="Liu D."/>
            <person name="Zhang X."/>
            <person name="Ji Z."/>
            <person name="Zhao W."/>
            <person name="Sun Y."/>
            <person name="Zhang Z."/>
            <person name="Bao J."/>
            <person name="Han Y."/>
            <person name="Dong L."/>
            <person name="Ji J."/>
            <person name="Chen P."/>
            <person name="Wu S."/>
            <person name="Liu J."/>
            <person name="Xiao Y."/>
            <person name="Bu D."/>
            <person name="Tan J."/>
            <person name="Yang L."/>
            <person name="Ye C."/>
            <person name="Zhang J."/>
            <person name="Xu J."/>
            <person name="Zhou Y."/>
            <person name="Yu Y."/>
            <person name="Zhang B."/>
            <person name="Zhuang S."/>
            <person name="Wei H."/>
            <person name="Liu B."/>
            <person name="Lei M."/>
            <person name="Yu H."/>
            <person name="Li Y."/>
            <person name="Xu H."/>
            <person name="Wei S."/>
            <person name="He X."/>
            <person name="Fang L."/>
            <person name="Zhang Z."/>
            <person name="Zhang Y."/>
            <person name="Huang X."/>
            <person name="Su Z."/>
            <person name="Tong W."/>
            <person name="Li J."/>
            <person name="Tong Z."/>
            <person name="Li S."/>
            <person name="Ye J."/>
            <person name="Wang L."/>
            <person name="Fang L."/>
            <person name="Lei T."/>
            <person name="Chen C.-S."/>
            <person name="Chen H.-C."/>
            <person name="Xu Z."/>
            <person name="Li H."/>
            <person name="Huang H."/>
            <person name="Zhang F."/>
            <person name="Xu H."/>
            <person name="Li N."/>
            <person name="Zhao C."/>
            <person name="Li S."/>
            <person name="Dong L."/>
            <person name="Huang Y."/>
            <person name="Li L."/>
            <person name="Xi Y."/>
            <person name="Qi Q."/>
            <person name="Li W."/>
            <person name="Zhang B."/>
            <person name="Hu W."/>
            <person name="Zhang Y."/>
            <person name="Tian X."/>
            <person name="Jiao Y."/>
            <person name="Liang X."/>
            <person name="Jin J."/>
            <person name="Gao L."/>
            <person name="Zheng W."/>
            <person name="Hao B."/>
            <person name="Liu S.-M."/>
            <person name="Wang W."/>
            <person name="Yuan L."/>
            <person name="Cao M."/>
            <person name="McDermott J."/>
            <person name="Samudrala R."/>
            <person name="Wang J."/>
            <person name="Wong G.K.-S."/>
            <person name="Yang H."/>
        </authorList>
    </citation>
    <scope>NUCLEOTIDE SEQUENCE [LARGE SCALE GENOMIC DNA]</scope>
    <source>
        <strain>cv. Nipponbare</strain>
    </source>
</reference>
<reference key="4">
    <citation type="journal article" date="2006" name="Mol. Genet. Genomics">
        <title>Genome-wide analysis of cyclin family in rice (Oryza sativa L.).</title>
        <authorList>
            <person name="La H."/>
            <person name="Li J."/>
            <person name="Ji Z."/>
            <person name="Cheng Y."/>
            <person name="Li X."/>
            <person name="Jiang S."/>
            <person name="Venkatesh P.N."/>
            <person name="Ramachandran S."/>
        </authorList>
    </citation>
    <scope>GENE FAMILY</scope>
    <scope>NOMENCLATURE</scope>
</reference>
<gene>
    <name type="primary">CycF2-1</name>
    <name type="ordered locus">Os02g0607000</name>
    <name type="ordered locus">LOC_Os02g39420</name>
    <name type="ORF">OsJ_007235</name>
    <name type="ORF">OSJNBa0030C08.9</name>
</gene>
<evidence type="ECO:0000256" key="1">
    <source>
        <dbReference type="SAM" id="MobiDB-lite"/>
    </source>
</evidence>
<evidence type="ECO:0000305" key="2"/>
<organism>
    <name type="scientific">Oryza sativa subsp. japonica</name>
    <name type="common">Rice</name>
    <dbReference type="NCBI Taxonomy" id="39947"/>
    <lineage>
        <taxon>Eukaryota</taxon>
        <taxon>Viridiplantae</taxon>
        <taxon>Streptophyta</taxon>
        <taxon>Embryophyta</taxon>
        <taxon>Tracheophyta</taxon>
        <taxon>Spermatophyta</taxon>
        <taxon>Magnoliopsida</taxon>
        <taxon>Liliopsida</taxon>
        <taxon>Poales</taxon>
        <taxon>Poaceae</taxon>
        <taxon>BOP clade</taxon>
        <taxon>Oryzoideae</taxon>
        <taxon>Oryzeae</taxon>
        <taxon>Oryzinae</taxon>
        <taxon>Oryza</taxon>
        <taxon>Oryza sativa</taxon>
    </lineage>
</organism>